<dbReference type="EC" id="3.1.3.11" evidence="1"/>
<dbReference type="EMBL" id="CP000908">
    <property type="protein sequence ID" value="ABY29384.1"/>
    <property type="molecule type" value="Genomic_DNA"/>
</dbReference>
<dbReference type="RefSeq" id="WP_012252674.1">
    <property type="nucleotide sequence ID" value="NC_010172.1"/>
</dbReference>
<dbReference type="SMR" id="A9W1C8"/>
<dbReference type="KEGG" id="mex:Mext_0979"/>
<dbReference type="eggNOG" id="COG0158">
    <property type="taxonomic scope" value="Bacteria"/>
</dbReference>
<dbReference type="HOGENOM" id="CLU_039977_0_0_5"/>
<dbReference type="BioCyc" id="MEXT419610:MEXT_RS04855-MONOMER"/>
<dbReference type="UniPathway" id="UPA00138"/>
<dbReference type="GO" id="GO:0005829">
    <property type="term" value="C:cytosol"/>
    <property type="evidence" value="ECO:0007669"/>
    <property type="project" value="TreeGrafter"/>
</dbReference>
<dbReference type="GO" id="GO:0042132">
    <property type="term" value="F:fructose 1,6-bisphosphate 1-phosphatase activity"/>
    <property type="evidence" value="ECO:0007669"/>
    <property type="project" value="UniProtKB-UniRule"/>
</dbReference>
<dbReference type="GO" id="GO:0000287">
    <property type="term" value="F:magnesium ion binding"/>
    <property type="evidence" value="ECO:0007669"/>
    <property type="project" value="UniProtKB-UniRule"/>
</dbReference>
<dbReference type="GO" id="GO:0030388">
    <property type="term" value="P:fructose 1,6-bisphosphate metabolic process"/>
    <property type="evidence" value="ECO:0007669"/>
    <property type="project" value="TreeGrafter"/>
</dbReference>
<dbReference type="GO" id="GO:0006002">
    <property type="term" value="P:fructose 6-phosphate metabolic process"/>
    <property type="evidence" value="ECO:0007669"/>
    <property type="project" value="TreeGrafter"/>
</dbReference>
<dbReference type="GO" id="GO:0006000">
    <property type="term" value="P:fructose metabolic process"/>
    <property type="evidence" value="ECO:0007669"/>
    <property type="project" value="TreeGrafter"/>
</dbReference>
<dbReference type="GO" id="GO:0006094">
    <property type="term" value="P:gluconeogenesis"/>
    <property type="evidence" value="ECO:0007669"/>
    <property type="project" value="UniProtKB-UniRule"/>
</dbReference>
<dbReference type="GO" id="GO:0005986">
    <property type="term" value="P:sucrose biosynthetic process"/>
    <property type="evidence" value="ECO:0007669"/>
    <property type="project" value="TreeGrafter"/>
</dbReference>
<dbReference type="CDD" id="cd00354">
    <property type="entry name" value="FBPase"/>
    <property type="match status" value="1"/>
</dbReference>
<dbReference type="FunFam" id="3.40.190.80:FF:000011">
    <property type="entry name" value="Fructose-1,6-bisphosphatase class 1"/>
    <property type="match status" value="1"/>
</dbReference>
<dbReference type="Gene3D" id="3.40.190.80">
    <property type="match status" value="1"/>
</dbReference>
<dbReference type="Gene3D" id="3.30.540.10">
    <property type="entry name" value="Fructose-1,6-Bisphosphatase, subunit A, domain 1"/>
    <property type="match status" value="1"/>
</dbReference>
<dbReference type="HAMAP" id="MF_01855">
    <property type="entry name" value="FBPase_class1"/>
    <property type="match status" value="1"/>
</dbReference>
<dbReference type="InterPro" id="IPR044015">
    <property type="entry name" value="FBPase_C_dom"/>
</dbReference>
<dbReference type="InterPro" id="IPR000146">
    <property type="entry name" value="FBPase_class-1"/>
</dbReference>
<dbReference type="InterPro" id="IPR033391">
    <property type="entry name" value="FBPase_N"/>
</dbReference>
<dbReference type="InterPro" id="IPR028343">
    <property type="entry name" value="FBPtase"/>
</dbReference>
<dbReference type="InterPro" id="IPR020548">
    <property type="entry name" value="Fructose_bisphosphatase_AS"/>
</dbReference>
<dbReference type="NCBIfam" id="NF006779">
    <property type="entry name" value="PRK09293.1-3"/>
    <property type="match status" value="1"/>
</dbReference>
<dbReference type="NCBIfam" id="NF006780">
    <property type="entry name" value="PRK09293.1-4"/>
    <property type="match status" value="1"/>
</dbReference>
<dbReference type="PANTHER" id="PTHR11556">
    <property type="entry name" value="FRUCTOSE-1,6-BISPHOSPHATASE-RELATED"/>
    <property type="match status" value="1"/>
</dbReference>
<dbReference type="PANTHER" id="PTHR11556:SF35">
    <property type="entry name" value="SEDOHEPTULOSE-1,7-BISPHOSPHATASE, CHLOROPLASTIC"/>
    <property type="match status" value="1"/>
</dbReference>
<dbReference type="Pfam" id="PF00316">
    <property type="entry name" value="FBPase"/>
    <property type="match status" value="1"/>
</dbReference>
<dbReference type="Pfam" id="PF18913">
    <property type="entry name" value="FBPase_C"/>
    <property type="match status" value="1"/>
</dbReference>
<dbReference type="PIRSF" id="PIRSF500210">
    <property type="entry name" value="FBPtase"/>
    <property type="match status" value="1"/>
</dbReference>
<dbReference type="PIRSF" id="PIRSF000904">
    <property type="entry name" value="FBPtase_SBPase"/>
    <property type="match status" value="1"/>
</dbReference>
<dbReference type="PRINTS" id="PR00115">
    <property type="entry name" value="F16BPHPHTASE"/>
</dbReference>
<dbReference type="SUPFAM" id="SSF56655">
    <property type="entry name" value="Carbohydrate phosphatase"/>
    <property type="match status" value="1"/>
</dbReference>
<dbReference type="PROSITE" id="PS00124">
    <property type="entry name" value="FBPASE"/>
    <property type="match status" value="1"/>
</dbReference>
<accession>A9W1C8</accession>
<comment type="catalytic activity">
    <reaction evidence="1">
        <text>beta-D-fructose 1,6-bisphosphate + H2O = beta-D-fructose 6-phosphate + phosphate</text>
        <dbReference type="Rhea" id="RHEA:11064"/>
        <dbReference type="ChEBI" id="CHEBI:15377"/>
        <dbReference type="ChEBI" id="CHEBI:32966"/>
        <dbReference type="ChEBI" id="CHEBI:43474"/>
        <dbReference type="ChEBI" id="CHEBI:57634"/>
        <dbReference type="EC" id="3.1.3.11"/>
    </reaction>
</comment>
<comment type="cofactor">
    <cofactor evidence="1">
        <name>Mg(2+)</name>
        <dbReference type="ChEBI" id="CHEBI:18420"/>
    </cofactor>
    <text evidence="1">Binds 2 magnesium ions per subunit.</text>
</comment>
<comment type="pathway">
    <text evidence="1">Carbohydrate biosynthesis; gluconeogenesis.</text>
</comment>
<comment type="subunit">
    <text evidence="1">Homotetramer.</text>
</comment>
<comment type="subcellular location">
    <subcellularLocation>
        <location evidence="1">Cytoplasm</location>
    </subcellularLocation>
</comment>
<comment type="similarity">
    <text evidence="1">Belongs to the FBPase class 1 family.</text>
</comment>
<feature type="chain" id="PRO_0000364600" description="Fructose-1,6-bisphosphatase class 1">
    <location>
        <begin position="1"/>
        <end position="348"/>
    </location>
</feature>
<feature type="binding site" evidence="1">
    <location>
        <position position="92"/>
    </location>
    <ligand>
        <name>Mg(2+)</name>
        <dbReference type="ChEBI" id="CHEBI:18420"/>
        <label>1</label>
    </ligand>
</feature>
<feature type="binding site" evidence="1">
    <location>
        <position position="111"/>
    </location>
    <ligand>
        <name>Mg(2+)</name>
        <dbReference type="ChEBI" id="CHEBI:18420"/>
        <label>1</label>
    </ligand>
</feature>
<feature type="binding site" evidence="1">
    <location>
        <position position="111"/>
    </location>
    <ligand>
        <name>Mg(2+)</name>
        <dbReference type="ChEBI" id="CHEBI:18420"/>
        <label>2</label>
    </ligand>
</feature>
<feature type="binding site" evidence="1">
    <location>
        <position position="113"/>
    </location>
    <ligand>
        <name>Mg(2+)</name>
        <dbReference type="ChEBI" id="CHEBI:18420"/>
        <label>1</label>
    </ligand>
</feature>
<feature type="binding site" evidence="1">
    <location>
        <begin position="114"/>
        <end position="117"/>
    </location>
    <ligand>
        <name>substrate</name>
    </ligand>
</feature>
<feature type="binding site" evidence="1">
    <location>
        <position position="114"/>
    </location>
    <ligand>
        <name>Mg(2+)</name>
        <dbReference type="ChEBI" id="CHEBI:18420"/>
        <label>2</label>
    </ligand>
</feature>
<feature type="binding site" evidence="1">
    <location>
        <position position="204"/>
    </location>
    <ligand>
        <name>substrate</name>
    </ligand>
</feature>
<feature type="binding site" evidence="1">
    <location>
        <position position="276"/>
    </location>
    <ligand>
        <name>Mg(2+)</name>
        <dbReference type="ChEBI" id="CHEBI:18420"/>
        <label>2</label>
    </ligand>
</feature>
<organism>
    <name type="scientific">Methylorubrum extorquens (strain PA1)</name>
    <name type="common">Methylobacterium extorquens</name>
    <dbReference type="NCBI Taxonomy" id="419610"/>
    <lineage>
        <taxon>Bacteria</taxon>
        <taxon>Pseudomonadati</taxon>
        <taxon>Pseudomonadota</taxon>
        <taxon>Alphaproteobacteria</taxon>
        <taxon>Hyphomicrobiales</taxon>
        <taxon>Methylobacteriaceae</taxon>
        <taxon>Methylorubrum</taxon>
    </lineage>
</organism>
<name>F16PA_METEP</name>
<gene>
    <name evidence="1" type="primary">fbp</name>
    <name type="ordered locus">Mext_0979</name>
</gene>
<protein>
    <recommendedName>
        <fullName evidence="1">Fructose-1,6-bisphosphatase class 1</fullName>
        <shortName evidence="1">FBPase class 1</shortName>
        <ecNumber evidence="1">3.1.3.11</ecNumber>
    </recommendedName>
    <alternativeName>
        <fullName evidence="1">D-fructose-1,6-bisphosphate 1-phosphohydrolase class 1</fullName>
    </alternativeName>
</protein>
<sequence>MTKPYGSSLDDHLDAEVAREPSLADTAATIRALAAAAIDVSETVGRGSLAGDLAAQGEHNSDGDVQKALDVIAHKRFMQALEEAPVAQVASEEAEDVVTLKAGAPLAVAIDPLDGSSNIGVGMVVGTIFGIRPVTPGEDPNASFLTPGTTQTAAGFVVYGPATTFVVTLGNGTRIFTLDRTDNVFRLTHDAMKIVPSASEYAINASNVRHWDGPVKSYIEDCLRGSEGPRDRDFNMRWTAALVADAQRVLIRGGVFLYPGDNRKGYAQGRLRLLYETAPIAFLIEQAGGGATDGQGRILERVAAKIHERSPLVFGSTEEVECVGKYYDGRQPSAGRSPLFGQRGLMRS</sequence>
<keyword id="KW-0119">Carbohydrate metabolism</keyword>
<keyword id="KW-0963">Cytoplasm</keyword>
<keyword id="KW-0378">Hydrolase</keyword>
<keyword id="KW-0460">Magnesium</keyword>
<keyword id="KW-0479">Metal-binding</keyword>
<proteinExistence type="inferred from homology"/>
<reference key="1">
    <citation type="submission" date="2007-12" db="EMBL/GenBank/DDBJ databases">
        <title>Complete sequence of Methylobacterium extorquens PA1.</title>
        <authorList>
            <consortium name="US DOE Joint Genome Institute"/>
            <person name="Copeland A."/>
            <person name="Lucas S."/>
            <person name="Lapidus A."/>
            <person name="Barry K."/>
            <person name="Glavina del Rio T."/>
            <person name="Dalin E."/>
            <person name="Tice H."/>
            <person name="Pitluck S."/>
            <person name="Saunders E."/>
            <person name="Brettin T."/>
            <person name="Bruce D."/>
            <person name="Detter J.C."/>
            <person name="Han C."/>
            <person name="Schmutz J."/>
            <person name="Larimer F."/>
            <person name="Land M."/>
            <person name="Hauser L."/>
            <person name="Kyrpides N."/>
            <person name="Kim E."/>
            <person name="Marx C."/>
            <person name="Richardson P."/>
        </authorList>
    </citation>
    <scope>NUCLEOTIDE SEQUENCE [LARGE SCALE GENOMIC DNA]</scope>
    <source>
        <strain>PA1</strain>
    </source>
</reference>
<evidence type="ECO:0000255" key="1">
    <source>
        <dbReference type="HAMAP-Rule" id="MF_01855"/>
    </source>
</evidence>